<evidence type="ECO:0000255" key="1">
    <source>
        <dbReference type="PROSITE-ProRule" id="PRU00042"/>
    </source>
</evidence>
<evidence type="ECO:0000255" key="2">
    <source>
        <dbReference type="PROSITE-ProRule" id="PRU00119"/>
    </source>
</evidence>
<evidence type="ECO:0000256" key="3">
    <source>
        <dbReference type="SAM" id="MobiDB-lite"/>
    </source>
</evidence>
<evidence type="ECO:0000269" key="4">
    <source>
    </source>
</evidence>
<evidence type="ECO:0000305" key="5"/>
<evidence type="ECO:0000305" key="6">
    <source>
    </source>
</evidence>
<protein>
    <recommendedName>
        <fullName>Zinc finger protein 324A</fullName>
    </recommendedName>
    <alternativeName>
        <fullName>Zinc finger protein ZF5128</fullName>
    </alternativeName>
</protein>
<name>Z324A_HUMAN</name>
<dbReference type="EMBL" id="AF060503">
    <property type="protein sequence ID" value="AAC33716.1"/>
    <property type="molecule type" value="mRNA"/>
</dbReference>
<dbReference type="EMBL" id="AK092341">
    <property type="protein sequence ID" value="BAG52533.1"/>
    <property type="molecule type" value="mRNA"/>
</dbReference>
<dbReference type="EMBL" id="CH471135">
    <property type="protein sequence ID" value="EAW72594.1"/>
    <property type="molecule type" value="Genomic_DNA"/>
</dbReference>
<dbReference type="CCDS" id="CCDS12981.1"/>
<dbReference type="RefSeq" id="NP_055162.1">
    <property type="nucleotide sequence ID" value="NM_014347.3"/>
</dbReference>
<dbReference type="SMR" id="O75467"/>
<dbReference type="BioGRID" id="117331">
    <property type="interactions" value="47"/>
</dbReference>
<dbReference type="FunCoup" id="O75467">
    <property type="interactions" value="8"/>
</dbReference>
<dbReference type="IntAct" id="O75467">
    <property type="interactions" value="37"/>
</dbReference>
<dbReference type="STRING" id="9606.ENSP00000444812"/>
<dbReference type="GlyGen" id="O75467">
    <property type="glycosylation" value="1 site"/>
</dbReference>
<dbReference type="iPTMnet" id="O75467"/>
<dbReference type="PhosphoSitePlus" id="O75467"/>
<dbReference type="SwissPalm" id="O75467"/>
<dbReference type="BioMuta" id="ZNF324"/>
<dbReference type="jPOST" id="O75467"/>
<dbReference type="MassIVE" id="O75467"/>
<dbReference type="PaxDb" id="9606-ENSP00000444812"/>
<dbReference type="PeptideAtlas" id="O75467"/>
<dbReference type="ProteomicsDB" id="50026"/>
<dbReference type="Pumba" id="O75467"/>
<dbReference type="Antibodypedia" id="33347">
    <property type="antibodies" value="123 antibodies from 18 providers"/>
</dbReference>
<dbReference type="DNASU" id="25799"/>
<dbReference type="Ensembl" id="ENST00000196482.4">
    <property type="protein sequence ID" value="ENSP00000196482.3"/>
    <property type="gene ID" value="ENSG00000083812.13"/>
</dbReference>
<dbReference type="Ensembl" id="ENST00000536459.6">
    <property type="protein sequence ID" value="ENSP00000444812.1"/>
    <property type="gene ID" value="ENSG00000083812.13"/>
</dbReference>
<dbReference type="GeneID" id="25799"/>
<dbReference type="KEGG" id="hsa:25799"/>
<dbReference type="MANE-Select" id="ENST00000196482.4">
    <property type="protein sequence ID" value="ENSP00000196482.3"/>
    <property type="RefSeq nucleotide sequence ID" value="NM_014347.3"/>
    <property type="RefSeq protein sequence ID" value="NP_055162.1"/>
</dbReference>
<dbReference type="UCSC" id="uc002qsw.3">
    <property type="organism name" value="human"/>
</dbReference>
<dbReference type="AGR" id="HGNC:14096"/>
<dbReference type="CTD" id="25799"/>
<dbReference type="DisGeNET" id="25799"/>
<dbReference type="GeneCards" id="ZNF324"/>
<dbReference type="HGNC" id="HGNC:14096">
    <property type="gene designation" value="ZNF324"/>
</dbReference>
<dbReference type="HPA" id="ENSG00000083812">
    <property type="expression patterns" value="Low tissue specificity"/>
</dbReference>
<dbReference type="MIM" id="617477">
    <property type="type" value="gene"/>
</dbReference>
<dbReference type="neXtProt" id="NX_O75467"/>
<dbReference type="OpenTargets" id="ENSG00000083812"/>
<dbReference type="PharmGKB" id="PA37839"/>
<dbReference type="VEuPathDB" id="HostDB:ENSG00000083812"/>
<dbReference type="eggNOG" id="KOG1721">
    <property type="taxonomic scope" value="Eukaryota"/>
</dbReference>
<dbReference type="GeneTree" id="ENSGT00940000163047"/>
<dbReference type="InParanoid" id="O75467"/>
<dbReference type="OMA" id="TIWHIMS"/>
<dbReference type="OrthoDB" id="3437960at2759"/>
<dbReference type="PAN-GO" id="O75467">
    <property type="GO annotations" value="4 GO annotations based on evolutionary models"/>
</dbReference>
<dbReference type="PhylomeDB" id="O75467"/>
<dbReference type="TreeFam" id="TF337574"/>
<dbReference type="PathwayCommons" id="O75467"/>
<dbReference type="Reactome" id="R-HSA-212436">
    <property type="pathway name" value="Generic Transcription Pathway"/>
</dbReference>
<dbReference type="Reactome" id="R-HSA-9843940">
    <property type="pathway name" value="Regulation of endogenous retroelements by KRAB-ZFP proteins"/>
</dbReference>
<dbReference type="SignaLink" id="O75467"/>
<dbReference type="BioGRID-ORCS" id="25799">
    <property type="hits" value="20 hits in 1180 CRISPR screens"/>
</dbReference>
<dbReference type="GenomeRNAi" id="25799"/>
<dbReference type="Pharos" id="O75467">
    <property type="development level" value="Tdark"/>
</dbReference>
<dbReference type="PRO" id="PR:O75467"/>
<dbReference type="Proteomes" id="UP000005640">
    <property type="component" value="Chromosome 19"/>
</dbReference>
<dbReference type="RNAct" id="O75467">
    <property type="molecule type" value="protein"/>
</dbReference>
<dbReference type="Bgee" id="ENSG00000083812">
    <property type="expression patterns" value="Expressed in cortical plate and 101 other cell types or tissues"/>
</dbReference>
<dbReference type="ExpressionAtlas" id="O75467">
    <property type="expression patterns" value="baseline and differential"/>
</dbReference>
<dbReference type="GO" id="GO:0005634">
    <property type="term" value="C:nucleus"/>
    <property type="evidence" value="ECO:0000318"/>
    <property type="project" value="GO_Central"/>
</dbReference>
<dbReference type="GO" id="GO:0000981">
    <property type="term" value="F:DNA-binding transcription factor activity, RNA polymerase II-specific"/>
    <property type="evidence" value="ECO:0000318"/>
    <property type="project" value="GO_Central"/>
</dbReference>
<dbReference type="GO" id="GO:0000978">
    <property type="term" value="F:RNA polymerase II cis-regulatory region sequence-specific DNA binding"/>
    <property type="evidence" value="ECO:0000318"/>
    <property type="project" value="GO_Central"/>
</dbReference>
<dbReference type="GO" id="GO:0008270">
    <property type="term" value="F:zinc ion binding"/>
    <property type="evidence" value="ECO:0007669"/>
    <property type="project" value="UniProtKB-KW"/>
</dbReference>
<dbReference type="GO" id="GO:0008283">
    <property type="term" value="P:cell population proliferation"/>
    <property type="evidence" value="ECO:0000270"/>
    <property type="project" value="UniProtKB"/>
</dbReference>
<dbReference type="GO" id="GO:0000082">
    <property type="term" value="P:G1/S transition of mitotic cell cycle"/>
    <property type="evidence" value="ECO:0000270"/>
    <property type="project" value="UniProtKB"/>
</dbReference>
<dbReference type="GO" id="GO:0006357">
    <property type="term" value="P:regulation of transcription by RNA polymerase II"/>
    <property type="evidence" value="ECO:0000318"/>
    <property type="project" value="GO_Central"/>
</dbReference>
<dbReference type="CDD" id="cd07765">
    <property type="entry name" value="KRAB_A-box"/>
    <property type="match status" value="1"/>
</dbReference>
<dbReference type="FunFam" id="3.30.160.60:FF:000045">
    <property type="entry name" value="ZFP69 zinc finger protein B"/>
    <property type="match status" value="1"/>
</dbReference>
<dbReference type="FunFam" id="3.30.160.60:FF:000185">
    <property type="entry name" value="zinc finger protein 319"/>
    <property type="match status" value="1"/>
</dbReference>
<dbReference type="FunFam" id="3.30.160.60:FF:001472">
    <property type="entry name" value="Zinc finger protein 324"/>
    <property type="match status" value="1"/>
</dbReference>
<dbReference type="FunFam" id="3.30.160.60:FF:001471">
    <property type="entry name" value="Zinc finger protein 324A"/>
    <property type="match status" value="1"/>
</dbReference>
<dbReference type="FunFam" id="3.30.160.60:FF:001765">
    <property type="entry name" value="zinc finger protein 324A"/>
    <property type="match status" value="1"/>
</dbReference>
<dbReference type="FunFam" id="3.30.160.60:FF:001150">
    <property type="entry name" value="zinc finger protein 324A isoform X1"/>
    <property type="match status" value="1"/>
</dbReference>
<dbReference type="FunFam" id="3.30.160.60:FF:000200">
    <property type="entry name" value="zinc finger protein 510 isoform X2"/>
    <property type="match status" value="1"/>
</dbReference>
<dbReference type="FunFam" id="3.30.160.60:FF:000281">
    <property type="entry name" value="Zinc finger protein 558 isoform X1"/>
    <property type="match status" value="1"/>
</dbReference>
<dbReference type="FunFam" id="3.30.160.60:FF:000410">
    <property type="entry name" value="Zinc finger protein 777"/>
    <property type="match status" value="1"/>
</dbReference>
<dbReference type="Gene3D" id="6.10.140.140">
    <property type="match status" value="1"/>
</dbReference>
<dbReference type="Gene3D" id="3.30.160.60">
    <property type="entry name" value="Classic Zinc Finger"/>
    <property type="match status" value="9"/>
</dbReference>
<dbReference type="InterPro" id="IPR001909">
    <property type="entry name" value="KRAB"/>
</dbReference>
<dbReference type="InterPro" id="IPR036051">
    <property type="entry name" value="KRAB_dom_sf"/>
</dbReference>
<dbReference type="InterPro" id="IPR036236">
    <property type="entry name" value="Znf_C2H2_sf"/>
</dbReference>
<dbReference type="InterPro" id="IPR013087">
    <property type="entry name" value="Znf_C2H2_type"/>
</dbReference>
<dbReference type="PANTHER" id="PTHR24399:SF70">
    <property type="entry name" value="C2H2-TYPE DOMAIN-CONTAINING PROTEIN"/>
    <property type="match status" value="1"/>
</dbReference>
<dbReference type="PANTHER" id="PTHR24399">
    <property type="entry name" value="ZINC FINGER AND BTB DOMAIN-CONTAINING"/>
    <property type="match status" value="1"/>
</dbReference>
<dbReference type="Pfam" id="PF01352">
    <property type="entry name" value="KRAB"/>
    <property type="match status" value="1"/>
</dbReference>
<dbReference type="Pfam" id="PF00096">
    <property type="entry name" value="zf-C2H2"/>
    <property type="match status" value="8"/>
</dbReference>
<dbReference type="SMART" id="SM00349">
    <property type="entry name" value="KRAB"/>
    <property type="match status" value="1"/>
</dbReference>
<dbReference type="SMART" id="SM00355">
    <property type="entry name" value="ZnF_C2H2"/>
    <property type="match status" value="9"/>
</dbReference>
<dbReference type="SUPFAM" id="SSF57667">
    <property type="entry name" value="beta-beta-alpha zinc fingers"/>
    <property type="match status" value="5"/>
</dbReference>
<dbReference type="SUPFAM" id="SSF109640">
    <property type="entry name" value="KRAB domain (Kruppel-associated box)"/>
    <property type="match status" value="1"/>
</dbReference>
<dbReference type="PROSITE" id="PS50805">
    <property type="entry name" value="KRAB"/>
    <property type="match status" value="1"/>
</dbReference>
<dbReference type="PROSITE" id="PS00028">
    <property type="entry name" value="ZINC_FINGER_C2H2_1"/>
    <property type="match status" value="9"/>
</dbReference>
<dbReference type="PROSITE" id="PS50157">
    <property type="entry name" value="ZINC_FINGER_C2H2_2"/>
    <property type="match status" value="9"/>
</dbReference>
<feature type="chain" id="PRO_0000047533" description="Zinc finger protein 324A">
    <location>
        <begin position="1"/>
        <end position="553"/>
    </location>
</feature>
<feature type="domain" description="KRAB" evidence="2">
    <location>
        <begin position="1"/>
        <end position="72"/>
    </location>
</feature>
<feature type="zinc finger region" description="C2H2-type 1" evidence="1">
    <location>
        <begin position="257"/>
        <end position="279"/>
    </location>
</feature>
<feature type="zinc finger region" description="C2H2-type 2" evidence="1">
    <location>
        <begin position="285"/>
        <end position="307"/>
    </location>
</feature>
<feature type="zinc finger region" description="C2H2-type 3" evidence="1">
    <location>
        <begin position="313"/>
        <end position="335"/>
    </location>
</feature>
<feature type="zinc finger region" description="C2H2-type 4" evidence="1">
    <location>
        <begin position="341"/>
        <end position="363"/>
    </location>
</feature>
<feature type="zinc finger region" description="C2H2-type 5" evidence="1">
    <location>
        <begin position="369"/>
        <end position="391"/>
    </location>
</feature>
<feature type="zinc finger region" description="C2H2-type 6" evidence="1">
    <location>
        <begin position="397"/>
        <end position="419"/>
    </location>
</feature>
<feature type="zinc finger region" description="C2H2-type 7" evidence="1">
    <location>
        <begin position="425"/>
        <end position="447"/>
    </location>
</feature>
<feature type="zinc finger region" description="C2H2-type 8" evidence="1">
    <location>
        <begin position="453"/>
        <end position="475"/>
    </location>
</feature>
<feature type="zinc finger region" description="C2H2-type 9" evidence="1">
    <location>
        <begin position="481"/>
        <end position="503"/>
    </location>
</feature>
<feature type="region of interest" description="Disordered" evidence="3">
    <location>
        <begin position="186"/>
        <end position="221"/>
    </location>
</feature>
<feature type="region of interest" description="Disordered" evidence="3">
    <location>
        <begin position="502"/>
        <end position="553"/>
    </location>
</feature>
<feature type="short sequence motif" description="Nuclear localization signal" evidence="6">
    <location>
        <begin position="130"/>
        <end position="135"/>
    </location>
</feature>
<proteinExistence type="evidence at protein level"/>
<gene>
    <name type="primary">ZNF324</name>
    <name type="synonym">ZNF324A</name>
</gene>
<accession>O75467</accession>
<accession>B3KRX1</accession>
<organism>
    <name type="scientific">Homo sapiens</name>
    <name type="common">Human</name>
    <dbReference type="NCBI Taxonomy" id="9606"/>
    <lineage>
        <taxon>Eukaryota</taxon>
        <taxon>Metazoa</taxon>
        <taxon>Chordata</taxon>
        <taxon>Craniata</taxon>
        <taxon>Vertebrata</taxon>
        <taxon>Euteleostomi</taxon>
        <taxon>Mammalia</taxon>
        <taxon>Eutheria</taxon>
        <taxon>Euarchontoglires</taxon>
        <taxon>Primates</taxon>
        <taxon>Haplorrhini</taxon>
        <taxon>Catarrhini</taxon>
        <taxon>Hominidae</taxon>
        <taxon>Homo</taxon>
    </lineage>
</organism>
<comment type="function">
    <text evidence="6">May be involved in transcriptional regulation. May be involved in regulation of cell proliferation.</text>
</comment>
<comment type="subcellular location">
    <subcellularLocation>
        <location evidence="5">Nucleus</location>
    </subcellularLocation>
</comment>
<comment type="tissue specificity">
    <text evidence="4">Expressed at high levels in the spleen, thymus, and PBMC, at low levels in the prostate, ovary, small intestine, colon (mucosal lining), placenta, lung, and pancreas, and very weakly expressed in the liver and kidney.</text>
</comment>
<comment type="induction">
    <text evidence="4">Induced at the early stage of T cell activation. Regulated at the transcriptional level during the cell cycle. Induced at a maximum level in the S phase.</text>
</comment>
<comment type="similarity">
    <text evidence="5">Belongs to the krueppel C2H2-type zinc-finger protein family.</text>
</comment>
<sequence length="553" mass="61104">MAFEDVAVYFSQEEWGLLDTAQRALYRRVMLDNFALVASLGLSTSRPRVVIQLERGEEPWVPSGTDTTLSRTTYRRRNPGSWSLTEDRDVSGEWPRAFPDTPPGMTTSVFPVAGACHSVKSLQRQRGASPSRERKPTGVSVIYWERLLLGSGSGQASVSLRLTSPLRPPEGVRLREKTLTEHALLGRQPRTPERQKPCAQEVPGRTFGSAQDLEAAGGRGHHRMGAVWQEPHRLLGGQEPSTWDELGEALHAGEKSFECRACSKVFVKSSDLLKHLRTHTGERPYECAQCGKAFSQTSHLTQHQRIHSGETPYACPVCGKAFRHSSSLVRHQRIHTAEKSFRCSECGKAFSHGSNLSQHRKIHAGGRPYACAQCGRRFCRNSHLIQHERTHTGEKPFVCALCGAAFSQGSSLFKHQRVHTGEKPFACPQCGRAFSHSSNLTQHQLLHTGERPFRCVDCGKAFAKGAVLLSHRRIHTGEKPFVCTQCGRAFRERPALFHHQRIHTGEKTVRRSRASLHPQARSVAGASSEGAPAKETEPTPASGPAAVSQPAEV</sequence>
<reference key="1">
    <citation type="journal article" date="2001" name="Biochim. Biophys. Acta">
        <title>Nucleotide sequence and cell cycle-associated differential expression of ZF5128, a novel Kruppel type zinc finger protein gene.</title>
        <authorList>
            <person name="Rue S.W."/>
            <person name="Kim B.W."/>
            <person name="Jun D.Y."/>
            <person name="Kim Y.H."/>
        </authorList>
    </citation>
    <scope>NUCLEOTIDE SEQUENCE [MRNA]</scope>
    <scope>TISSUE SPECIFICITY</scope>
    <scope>INDUCTION</scope>
</reference>
<reference key="2">
    <citation type="journal article" date="2004" name="Nat. Genet.">
        <title>Complete sequencing and characterization of 21,243 full-length human cDNAs.</title>
        <authorList>
            <person name="Ota T."/>
            <person name="Suzuki Y."/>
            <person name="Nishikawa T."/>
            <person name="Otsuki T."/>
            <person name="Sugiyama T."/>
            <person name="Irie R."/>
            <person name="Wakamatsu A."/>
            <person name="Hayashi K."/>
            <person name="Sato H."/>
            <person name="Nagai K."/>
            <person name="Kimura K."/>
            <person name="Makita H."/>
            <person name="Sekine M."/>
            <person name="Obayashi M."/>
            <person name="Nishi T."/>
            <person name="Shibahara T."/>
            <person name="Tanaka T."/>
            <person name="Ishii S."/>
            <person name="Yamamoto J."/>
            <person name="Saito K."/>
            <person name="Kawai Y."/>
            <person name="Isono Y."/>
            <person name="Nakamura Y."/>
            <person name="Nagahari K."/>
            <person name="Murakami K."/>
            <person name="Yasuda T."/>
            <person name="Iwayanagi T."/>
            <person name="Wagatsuma M."/>
            <person name="Shiratori A."/>
            <person name="Sudo H."/>
            <person name="Hosoiri T."/>
            <person name="Kaku Y."/>
            <person name="Kodaira H."/>
            <person name="Kondo H."/>
            <person name="Sugawara M."/>
            <person name="Takahashi M."/>
            <person name="Kanda K."/>
            <person name="Yokoi T."/>
            <person name="Furuya T."/>
            <person name="Kikkawa E."/>
            <person name="Omura Y."/>
            <person name="Abe K."/>
            <person name="Kamihara K."/>
            <person name="Katsuta N."/>
            <person name="Sato K."/>
            <person name="Tanikawa M."/>
            <person name="Yamazaki M."/>
            <person name="Ninomiya K."/>
            <person name="Ishibashi T."/>
            <person name="Yamashita H."/>
            <person name="Murakawa K."/>
            <person name="Fujimori K."/>
            <person name="Tanai H."/>
            <person name="Kimata M."/>
            <person name="Watanabe M."/>
            <person name="Hiraoka S."/>
            <person name="Chiba Y."/>
            <person name="Ishida S."/>
            <person name="Ono Y."/>
            <person name="Takiguchi S."/>
            <person name="Watanabe S."/>
            <person name="Yosida M."/>
            <person name="Hotuta T."/>
            <person name="Kusano J."/>
            <person name="Kanehori K."/>
            <person name="Takahashi-Fujii A."/>
            <person name="Hara H."/>
            <person name="Tanase T.-O."/>
            <person name="Nomura Y."/>
            <person name="Togiya S."/>
            <person name="Komai F."/>
            <person name="Hara R."/>
            <person name="Takeuchi K."/>
            <person name="Arita M."/>
            <person name="Imose N."/>
            <person name="Musashino K."/>
            <person name="Yuuki H."/>
            <person name="Oshima A."/>
            <person name="Sasaki N."/>
            <person name="Aotsuka S."/>
            <person name="Yoshikawa Y."/>
            <person name="Matsunawa H."/>
            <person name="Ichihara T."/>
            <person name="Shiohata N."/>
            <person name="Sano S."/>
            <person name="Moriya S."/>
            <person name="Momiyama H."/>
            <person name="Satoh N."/>
            <person name="Takami S."/>
            <person name="Terashima Y."/>
            <person name="Suzuki O."/>
            <person name="Nakagawa S."/>
            <person name="Senoh A."/>
            <person name="Mizoguchi H."/>
            <person name="Goto Y."/>
            <person name="Shimizu F."/>
            <person name="Wakebe H."/>
            <person name="Hishigaki H."/>
            <person name="Watanabe T."/>
            <person name="Sugiyama A."/>
            <person name="Takemoto M."/>
            <person name="Kawakami B."/>
            <person name="Yamazaki M."/>
            <person name="Watanabe K."/>
            <person name="Kumagai A."/>
            <person name="Itakura S."/>
            <person name="Fukuzumi Y."/>
            <person name="Fujimori Y."/>
            <person name="Komiyama M."/>
            <person name="Tashiro H."/>
            <person name="Tanigami A."/>
            <person name="Fujiwara T."/>
            <person name="Ono T."/>
            <person name="Yamada K."/>
            <person name="Fujii Y."/>
            <person name="Ozaki K."/>
            <person name="Hirao M."/>
            <person name="Ohmori Y."/>
            <person name="Kawabata A."/>
            <person name="Hikiji T."/>
            <person name="Kobatake N."/>
            <person name="Inagaki H."/>
            <person name="Ikema Y."/>
            <person name="Okamoto S."/>
            <person name="Okitani R."/>
            <person name="Kawakami T."/>
            <person name="Noguchi S."/>
            <person name="Itoh T."/>
            <person name="Shigeta K."/>
            <person name="Senba T."/>
            <person name="Matsumura K."/>
            <person name="Nakajima Y."/>
            <person name="Mizuno T."/>
            <person name="Morinaga M."/>
            <person name="Sasaki M."/>
            <person name="Togashi T."/>
            <person name="Oyama M."/>
            <person name="Hata H."/>
            <person name="Watanabe M."/>
            <person name="Komatsu T."/>
            <person name="Mizushima-Sugano J."/>
            <person name="Satoh T."/>
            <person name="Shirai Y."/>
            <person name="Takahashi Y."/>
            <person name="Nakagawa K."/>
            <person name="Okumura K."/>
            <person name="Nagase T."/>
            <person name="Nomura N."/>
            <person name="Kikuchi H."/>
            <person name="Masuho Y."/>
            <person name="Yamashita R."/>
            <person name="Nakai K."/>
            <person name="Yada T."/>
            <person name="Nakamura Y."/>
            <person name="Ohara O."/>
            <person name="Isogai T."/>
            <person name="Sugano S."/>
        </authorList>
    </citation>
    <scope>NUCLEOTIDE SEQUENCE [LARGE SCALE MRNA]</scope>
    <source>
        <tissue>Brain</tissue>
    </source>
</reference>
<reference key="3">
    <citation type="submission" date="2005-07" db="EMBL/GenBank/DDBJ databases">
        <authorList>
            <person name="Mural R.J."/>
            <person name="Istrail S."/>
            <person name="Sutton G.G."/>
            <person name="Florea L."/>
            <person name="Halpern A.L."/>
            <person name="Mobarry C.M."/>
            <person name="Lippert R."/>
            <person name="Walenz B."/>
            <person name="Shatkay H."/>
            <person name="Dew I."/>
            <person name="Miller J.R."/>
            <person name="Flanigan M.J."/>
            <person name="Edwards N.J."/>
            <person name="Bolanos R."/>
            <person name="Fasulo D."/>
            <person name="Halldorsson B.V."/>
            <person name="Hannenhalli S."/>
            <person name="Turner R."/>
            <person name="Yooseph S."/>
            <person name="Lu F."/>
            <person name="Nusskern D.R."/>
            <person name="Shue B.C."/>
            <person name="Zheng X.H."/>
            <person name="Zhong F."/>
            <person name="Delcher A.L."/>
            <person name="Huson D.H."/>
            <person name="Kravitz S.A."/>
            <person name="Mouchard L."/>
            <person name="Reinert K."/>
            <person name="Remington K.A."/>
            <person name="Clark A.G."/>
            <person name="Waterman M.S."/>
            <person name="Eichler E.E."/>
            <person name="Adams M.D."/>
            <person name="Hunkapiller M.W."/>
            <person name="Myers E.W."/>
            <person name="Venter J.C."/>
        </authorList>
    </citation>
    <scope>NUCLEOTIDE SEQUENCE [LARGE SCALE GENOMIC DNA]</scope>
</reference>
<keyword id="KW-0238">DNA-binding</keyword>
<keyword id="KW-0479">Metal-binding</keyword>
<keyword id="KW-0539">Nucleus</keyword>
<keyword id="KW-1267">Proteomics identification</keyword>
<keyword id="KW-1185">Reference proteome</keyword>
<keyword id="KW-0677">Repeat</keyword>
<keyword id="KW-0804">Transcription</keyword>
<keyword id="KW-0805">Transcription regulation</keyword>
<keyword id="KW-0862">Zinc</keyword>
<keyword id="KW-0863">Zinc-finger</keyword>